<name>NADD_TRIV2</name>
<sequence>MQHLAIFGGTFDPIHWGHLLIAEAALQQISIEKVIWVPSLNPPHKKASAFRHRLAMLQLATQDNPAFTVSSVEKNRSGVSYAINTLTDLSVCFPNTHWYWIVGLDTFQTLPRWYRGQELAPMCDWLIAPRLVGGENIAQSELICKQVKQQLRKQSNTIHWHLLHIPLVGVSSSLIRKLYRVGKSIRYLVPEDVRSYIADHKLYSEDSE</sequence>
<protein>
    <recommendedName>
        <fullName evidence="1">Probable nicotinate-nucleotide adenylyltransferase</fullName>
        <ecNumber evidence="1">2.7.7.18</ecNumber>
    </recommendedName>
    <alternativeName>
        <fullName evidence="1">Deamido-NAD(+) diphosphorylase</fullName>
    </alternativeName>
    <alternativeName>
        <fullName evidence="1">Deamido-NAD(+) pyrophosphorylase</fullName>
    </alternativeName>
    <alternativeName>
        <fullName evidence="1">Nicotinate mononucleotide adenylyltransferase</fullName>
        <shortName evidence="1">NaMN adenylyltransferase</shortName>
    </alternativeName>
</protein>
<reference key="1">
    <citation type="journal article" date="2014" name="Stand. Genomic Sci.">
        <title>Complete genome sequence of Anabaena variabilis ATCC 29413.</title>
        <authorList>
            <person name="Thiel T."/>
            <person name="Pratte B.S."/>
            <person name="Zhong J."/>
            <person name="Goodwin L."/>
            <person name="Copeland A."/>
            <person name="Lucas S."/>
            <person name="Han C."/>
            <person name="Pitluck S."/>
            <person name="Land M.L."/>
            <person name="Kyrpides N.C."/>
            <person name="Woyke T."/>
        </authorList>
    </citation>
    <scope>NUCLEOTIDE SEQUENCE [LARGE SCALE GENOMIC DNA]</scope>
    <source>
        <strain>ATCC 29413 / PCC 7937</strain>
    </source>
</reference>
<keyword id="KW-0067">ATP-binding</keyword>
<keyword id="KW-0520">NAD</keyword>
<keyword id="KW-0547">Nucleotide-binding</keyword>
<keyword id="KW-0548">Nucleotidyltransferase</keyword>
<keyword id="KW-0662">Pyridine nucleotide biosynthesis</keyword>
<keyword id="KW-0808">Transferase</keyword>
<evidence type="ECO:0000255" key="1">
    <source>
        <dbReference type="HAMAP-Rule" id="MF_00244"/>
    </source>
</evidence>
<accession>Q3MAP9</accession>
<proteinExistence type="inferred from homology"/>
<gene>
    <name evidence="1" type="primary">nadD</name>
    <name type="ordered locus">Ava_2319</name>
</gene>
<feature type="chain" id="PRO_0000310093" description="Probable nicotinate-nucleotide adenylyltransferase">
    <location>
        <begin position="1"/>
        <end position="208"/>
    </location>
</feature>
<comment type="function">
    <text evidence="1">Catalyzes the reversible adenylation of nicotinate mononucleotide (NaMN) to nicotinic acid adenine dinucleotide (NaAD).</text>
</comment>
<comment type="catalytic activity">
    <reaction evidence="1">
        <text>nicotinate beta-D-ribonucleotide + ATP + H(+) = deamido-NAD(+) + diphosphate</text>
        <dbReference type="Rhea" id="RHEA:22860"/>
        <dbReference type="ChEBI" id="CHEBI:15378"/>
        <dbReference type="ChEBI" id="CHEBI:30616"/>
        <dbReference type="ChEBI" id="CHEBI:33019"/>
        <dbReference type="ChEBI" id="CHEBI:57502"/>
        <dbReference type="ChEBI" id="CHEBI:58437"/>
        <dbReference type="EC" id="2.7.7.18"/>
    </reaction>
</comment>
<comment type="pathway">
    <text evidence="1">Cofactor biosynthesis; NAD(+) biosynthesis; deamido-NAD(+) from nicotinate D-ribonucleotide: step 1/1.</text>
</comment>
<comment type="similarity">
    <text evidence="1">Belongs to the NadD family.</text>
</comment>
<dbReference type="EC" id="2.7.7.18" evidence="1"/>
<dbReference type="EMBL" id="CP000117">
    <property type="protein sequence ID" value="ABA21937.1"/>
    <property type="molecule type" value="Genomic_DNA"/>
</dbReference>
<dbReference type="SMR" id="Q3MAP9"/>
<dbReference type="STRING" id="240292.Ava_2319"/>
<dbReference type="KEGG" id="ava:Ava_2319"/>
<dbReference type="eggNOG" id="COG1057">
    <property type="taxonomic scope" value="Bacteria"/>
</dbReference>
<dbReference type="HOGENOM" id="CLU_069765_0_1_3"/>
<dbReference type="UniPathway" id="UPA00253">
    <property type="reaction ID" value="UER00332"/>
</dbReference>
<dbReference type="Proteomes" id="UP000002533">
    <property type="component" value="Chromosome"/>
</dbReference>
<dbReference type="GO" id="GO:0005524">
    <property type="term" value="F:ATP binding"/>
    <property type="evidence" value="ECO:0007669"/>
    <property type="project" value="UniProtKB-KW"/>
</dbReference>
<dbReference type="GO" id="GO:0004515">
    <property type="term" value="F:nicotinate-nucleotide adenylyltransferase activity"/>
    <property type="evidence" value="ECO:0007669"/>
    <property type="project" value="UniProtKB-UniRule"/>
</dbReference>
<dbReference type="GO" id="GO:0009435">
    <property type="term" value="P:NAD biosynthetic process"/>
    <property type="evidence" value="ECO:0007669"/>
    <property type="project" value="UniProtKB-UniRule"/>
</dbReference>
<dbReference type="CDD" id="cd02165">
    <property type="entry name" value="NMNAT"/>
    <property type="match status" value="1"/>
</dbReference>
<dbReference type="Gene3D" id="3.40.50.620">
    <property type="entry name" value="HUPs"/>
    <property type="match status" value="1"/>
</dbReference>
<dbReference type="HAMAP" id="MF_00244">
    <property type="entry name" value="NaMN_adenylyltr"/>
    <property type="match status" value="1"/>
</dbReference>
<dbReference type="InterPro" id="IPR004821">
    <property type="entry name" value="Cyt_trans-like"/>
</dbReference>
<dbReference type="InterPro" id="IPR005248">
    <property type="entry name" value="NadD/NMNAT"/>
</dbReference>
<dbReference type="InterPro" id="IPR014729">
    <property type="entry name" value="Rossmann-like_a/b/a_fold"/>
</dbReference>
<dbReference type="NCBIfam" id="TIGR00125">
    <property type="entry name" value="cyt_tran_rel"/>
    <property type="match status" value="1"/>
</dbReference>
<dbReference type="NCBIfam" id="TIGR00482">
    <property type="entry name" value="nicotinate (nicotinamide) nucleotide adenylyltransferase"/>
    <property type="match status" value="1"/>
</dbReference>
<dbReference type="NCBIfam" id="NF000840">
    <property type="entry name" value="PRK00071.1-3"/>
    <property type="match status" value="1"/>
</dbReference>
<dbReference type="PANTHER" id="PTHR39321">
    <property type="entry name" value="NICOTINATE-NUCLEOTIDE ADENYLYLTRANSFERASE-RELATED"/>
    <property type="match status" value="1"/>
</dbReference>
<dbReference type="PANTHER" id="PTHR39321:SF3">
    <property type="entry name" value="PHOSPHOPANTETHEINE ADENYLYLTRANSFERASE"/>
    <property type="match status" value="1"/>
</dbReference>
<dbReference type="Pfam" id="PF01467">
    <property type="entry name" value="CTP_transf_like"/>
    <property type="match status" value="1"/>
</dbReference>
<dbReference type="SUPFAM" id="SSF52374">
    <property type="entry name" value="Nucleotidylyl transferase"/>
    <property type="match status" value="1"/>
</dbReference>
<organism>
    <name type="scientific">Trichormus variabilis (strain ATCC 29413 / PCC 7937)</name>
    <name type="common">Anabaena variabilis</name>
    <dbReference type="NCBI Taxonomy" id="240292"/>
    <lineage>
        <taxon>Bacteria</taxon>
        <taxon>Bacillati</taxon>
        <taxon>Cyanobacteriota</taxon>
        <taxon>Cyanophyceae</taxon>
        <taxon>Nostocales</taxon>
        <taxon>Nostocaceae</taxon>
        <taxon>Trichormus</taxon>
    </lineage>
</organism>